<proteinExistence type="inferred from homology"/>
<reference key="1">
    <citation type="journal article" date="2003" name="Proc. Natl. Acad. Sci. U.S.A.">
        <title>Complete genome sequence and analysis of Wolinella succinogenes.</title>
        <authorList>
            <person name="Baar C."/>
            <person name="Eppinger M."/>
            <person name="Raddatz G."/>
            <person name="Simon J."/>
            <person name="Lanz C."/>
            <person name="Klimmek O."/>
            <person name="Nandakumar R."/>
            <person name="Gross R."/>
            <person name="Rosinus A."/>
            <person name="Keller H."/>
            <person name="Jagtap P."/>
            <person name="Linke B."/>
            <person name="Meyer F."/>
            <person name="Lederer H."/>
            <person name="Schuster S.C."/>
        </authorList>
    </citation>
    <scope>NUCLEOTIDE SEQUENCE [LARGE SCALE GENOMIC DNA]</scope>
    <source>
        <strain>ATCC 29543 / DSM 1740 / CCUG 13145 / JCM 31913 / LMG 7466 / NCTC 11488 / FDC 602W</strain>
    </source>
</reference>
<protein>
    <recommendedName>
        <fullName evidence="1">ATP synthase subunit delta</fullName>
    </recommendedName>
    <alternativeName>
        <fullName evidence="1">ATP synthase F(1) sector subunit delta</fullName>
    </alternativeName>
    <alternativeName>
        <fullName evidence="1">F-type ATPase subunit delta</fullName>
        <shortName evidence="1">F-ATPase subunit delta</shortName>
    </alternativeName>
</protein>
<sequence>MRELVAKRYAKALVEALGEDRLASTLEWLKGSESAFGTEAFQEMLASPQISKTLKGQVVLDVLGDGEAKLLNFIKVLADKNRLELIPDVCKELEKSIAATRNEYVAVLTTQEAFDDKTLKAIEETLAKKLQAKLVLSQKREEFEGVKLVVEDLGVEVSFSRERFINDLKNHILKAF</sequence>
<evidence type="ECO:0000255" key="1">
    <source>
        <dbReference type="HAMAP-Rule" id="MF_01416"/>
    </source>
</evidence>
<keyword id="KW-0066">ATP synthesis</keyword>
<keyword id="KW-0997">Cell inner membrane</keyword>
<keyword id="KW-1003">Cell membrane</keyword>
<keyword id="KW-0139">CF(1)</keyword>
<keyword id="KW-0375">Hydrogen ion transport</keyword>
<keyword id="KW-0406">Ion transport</keyword>
<keyword id="KW-0472">Membrane</keyword>
<keyword id="KW-1185">Reference proteome</keyword>
<keyword id="KW-0813">Transport</keyword>
<comment type="function">
    <text evidence="1">F(1)F(0) ATP synthase produces ATP from ADP in the presence of a proton or sodium gradient. F-type ATPases consist of two structural domains, F(1) containing the extramembraneous catalytic core and F(0) containing the membrane proton channel, linked together by a central stalk and a peripheral stalk. During catalysis, ATP synthesis in the catalytic domain of F(1) is coupled via a rotary mechanism of the central stalk subunits to proton translocation.</text>
</comment>
<comment type="function">
    <text evidence="1">This protein is part of the stalk that links CF(0) to CF(1). It either transmits conformational changes from CF(0) to CF(1) or is implicated in proton conduction.</text>
</comment>
<comment type="subunit">
    <text evidence="1">F-type ATPases have 2 components, F(1) - the catalytic core - and F(0) - the membrane proton channel. F(1) has five subunits: alpha(3), beta(3), gamma(1), delta(1), epsilon(1). F(0) has three main subunits: a(1), b(2) and c(10-14). The alpha and beta chains form an alternating ring which encloses part of the gamma chain. F(1) is attached to F(0) by a central stalk formed by the gamma and epsilon chains, while a peripheral stalk is formed by the delta and b chains.</text>
</comment>
<comment type="subcellular location">
    <subcellularLocation>
        <location evidence="1">Cell inner membrane</location>
        <topology evidence="1">Peripheral membrane protein</topology>
    </subcellularLocation>
</comment>
<comment type="similarity">
    <text evidence="1">Belongs to the ATPase delta chain family.</text>
</comment>
<dbReference type="EMBL" id="BX571658">
    <property type="protein sequence ID" value="CAE09650.1"/>
    <property type="molecule type" value="Genomic_DNA"/>
</dbReference>
<dbReference type="RefSeq" id="WP_011138450.1">
    <property type="nucleotide sequence ID" value="NC_005090.1"/>
</dbReference>
<dbReference type="SMR" id="Q7MA21"/>
<dbReference type="STRING" id="273121.WS0513"/>
<dbReference type="KEGG" id="wsu:WS0513"/>
<dbReference type="eggNOG" id="COG0712">
    <property type="taxonomic scope" value="Bacteria"/>
</dbReference>
<dbReference type="HOGENOM" id="CLU_085114_3_1_7"/>
<dbReference type="Proteomes" id="UP000000422">
    <property type="component" value="Chromosome"/>
</dbReference>
<dbReference type="GO" id="GO:0005886">
    <property type="term" value="C:plasma membrane"/>
    <property type="evidence" value="ECO:0007669"/>
    <property type="project" value="UniProtKB-SubCell"/>
</dbReference>
<dbReference type="GO" id="GO:0045259">
    <property type="term" value="C:proton-transporting ATP synthase complex"/>
    <property type="evidence" value="ECO:0007669"/>
    <property type="project" value="UniProtKB-KW"/>
</dbReference>
<dbReference type="GO" id="GO:0046933">
    <property type="term" value="F:proton-transporting ATP synthase activity, rotational mechanism"/>
    <property type="evidence" value="ECO:0007669"/>
    <property type="project" value="UniProtKB-UniRule"/>
</dbReference>
<dbReference type="Gene3D" id="1.10.520.20">
    <property type="entry name" value="N-terminal domain of the delta subunit of the F1F0-ATP synthase"/>
    <property type="match status" value="1"/>
</dbReference>
<dbReference type="HAMAP" id="MF_01416">
    <property type="entry name" value="ATP_synth_delta_bact"/>
    <property type="match status" value="1"/>
</dbReference>
<dbReference type="InterPro" id="IPR026015">
    <property type="entry name" value="ATP_synth_OSCP/delta_N_sf"/>
</dbReference>
<dbReference type="InterPro" id="IPR000711">
    <property type="entry name" value="ATPase_OSCP/dsu"/>
</dbReference>
<dbReference type="NCBIfam" id="TIGR01145">
    <property type="entry name" value="ATP_synt_delta"/>
    <property type="match status" value="1"/>
</dbReference>
<dbReference type="NCBIfam" id="NF006291">
    <property type="entry name" value="PRK08474.1"/>
    <property type="match status" value="1"/>
</dbReference>
<dbReference type="PANTHER" id="PTHR11910">
    <property type="entry name" value="ATP SYNTHASE DELTA CHAIN"/>
    <property type="match status" value="1"/>
</dbReference>
<dbReference type="Pfam" id="PF00213">
    <property type="entry name" value="OSCP"/>
    <property type="match status" value="1"/>
</dbReference>
<dbReference type="PRINTS" id="PR00125">
    <property type="entry name" value="ATPASEDELTA"/>
</dbReference>
<dbReference type="SUPFAM" id="SSF47928">
    <property type="entry name" value="N-terminal domain of the delta subunit of the F1F0-ATP synthase"/>
    <property type="match status" value="1"/>
</dbReference>
<organism>
    <name type="scientific">Wolinella succinogenes (strain ATCC 29543 / DSM 1740 / CCUG 13145 / JCM 31913 / LMG 7466 / NCTC 11488 / FDC 602W)</name>
    <name type="common">Vibrio succinogenes</name>
    <dbReference type="NCBI Taxonomy" id="273121"/>
    <lineage>
        <taxon>Bacteria</taxon>
        <taxon>Pseudomonadati</taxon>
        <taxon>Campylobacterota</taxon>
        <taxon>Epsilonproteobacteria</taxon>
        <taxon>Campylobacterales</taxon>
        <taxon>Helicobacteraceae</taxon>
        <taxon>Wolinella</taxon>
    </lineage>
</organism>
<gene>
    <name evidence="1" type="primary">atpH</name>
    <name type="ordered locus">WS0513</name>
</gene>
<accession>Q7MA21</accession>
<name>ATPD_WOLSU</name>
<feature type="chain" id="PRO_0000382173" description="ATP synthase subunit delta">
    <location>
        <begin position="1"/>
        <end position="176"/>
    </location>
</feature>